<accession>A8F8Y7</accession>
<dbReference type="EMBL" id="CP000813">
    <property type="protein sequence ID" value="ABV60704.1"/>
    <property type="molecule type" value="Genomic_DNA"/>
</dbReference>
<dbReference type="RefSeq" id="WP_012008631.1">
    <property type="nucleotide sequence ID" value="NZ_VEIA01000011.1"/>
</dbReference>
<dbReference type="SMR" id="A8F8Y7"/>
<dbReference type="STRING" id="315750.BPUM_0004"/>
<dbReference type="GeneID" id="5623036"/>
<dbReference type="KEGG" id="bpu:BPUM_0004"/>
<dbReference type="eggNOG" id="COG1195">
    <property type="taxonomic scope" value="Bacteria"/>
</dbReference>
<dbReference type="HOGENOM" id="CLU_040267_0_1_9"/>
<dbReference type="OrthoDB" id="9803889at2"/>
<dbReference type="Proteomes" id="UP000001355">
    <property type="component" value="Chromosome"/>
</dbReference>
<dbReference type="GO" id="GO:0005737">
    <property type="term" value="C:cytoplasm"/>
    <property type="evidence" value="ECO:0007669"/>
    <property type="project" value="UniProtKB-SubCell"/>
</dbReference>
<dbReference type="GO" id="GO:0005524">
    <property type="term" value="F:ATP binding"/>
    <property type="evidence" value="ECO:0007669"/>
    <property type="project" value="UniProtKB-UniRule"/>
</dbReference>
<dbReference type="GO" id="GO:0003697">
    <property type="term" value="F:single-stranded DNA binding"/>
    <property type="evidence" value="ECO:0007669"/>
    <property type="project" value="UniProtKB-UniRule"/>
</dbReference>
<dbReference type="GO" id="GO:0006260">
    <property type="term" value="P:DNA replication"/>
    <property type="evidence" value="ECO:0007669"/>
    <property type="project" value="UniProtKB-UniRule"/>
</dbReference>
<dbReference type="GO" id="GO:0000731">
    <property type="term" value="P:DNA synthesis involved in DNA repair"/>
    <property type="evidence" value="ECO:0007669"/>
    <property type="project" value="TreeGrafter"/>
</dbReference>
<dbReference type="GO" id="GO:0006302">
    <property type="term" value="P:double-strand break repair"/>
    <property type="evidence" value="ECO:0007669"/>
    <property type="project" value="TreeGrafter"/>
</dbReference>
<dbReference type="GO" id="GO:0009432">
    <property type="term" value="P:SOS response"/>
    <property type="evidence" value="ECO:0007669"/>
    <property type="project" value="UniProtKB-UniRule"/>
</dbReference>
<dbReference type="CDD" id="cd03242">
    <property type="entry name" value="ABC_RecF"/>
    <property type="match status" value="1"/>
</dbReference>
<dbReference type="FunFam" id="1.20.1050.90:FF:000002">
    <property type="entry name" value="DNA replication and repair protein RecF"/>
    <property type="match status" value="1"/>
</dbReference>
<dbReference type="Gene3D" id="3.40.50.300">
    <property type="entry name" value="P-loop containing nucleotide triphosphate hydrolases"/>
    <property type="match status" value="1"/>
</dbReference>
<dbReference type="Gene3D" id="1.20.1050.90">
    <property type="entry name" value="RecF/RecN/SMC, N-terminal domain"/>
    <property type="match status" value="1"/>
</dbReference>
<dbReference type="HAMAP" id="MF_00365">
    <property type="entry name" value="RecF"/>
    <property type="match status" value="1"/>
</dbReference>
<dbReference type="InterPro" id="IPR001238">
    <property type="entry name" value="DNA-binding_RecF"/>
</dbReference>
<dbReference type="InterPro" id="IPR018078">
    <property type="entry name" value="DNA-binding_RecF_CS"/>
</dbReference>
<dbReference type="InterPro" id="IPR027417">
    <property type="entry name" value="P-loop_NTPase"/>
</dbReference>
<dbReference type="InterPro" id="IPR003395">
    <property type="entry name" value="RecF/RecN/SMC_N"/>
</dbReference>
<dbReference type="InterPro" id="IPR042174">
    <property type="entry name" value="RecF_2"/>
</dbReference>
<dbReference type="NCBIfam" id="TIGR00611">
    <property type="entry name" value="recf"/>
    <property type="match status" value="1"/>
</dbReference>
<dbReference type="PANTHER" id="PTHR32182">
    <property type="entry name" value="DNA REPLICATION AND REPAIR PROTEIN RECF"/>
    <property type="match status" value="1"/>
</dbReference>
<dbReference type="PANTHER" id="PTHR32182:SF0">
    <property type="entry name" value="DNA REPLICATION AND REPAIR PROTEIN RECF"/>
    <property type="match status" value="1"/>
</dbReference>
<dbReference type="Pfam" id="PF02463">
    <property type="entry name" value="SMC_N"/>
    <property type="match status" value="1"/>
</dbReference>
<dbReference type="SUPFAM" id="SSF52540">
    <property type="entry name" value="P-loop containing nucleoside triphosphate hydrolases"/>
    <property type="match status" value="1"/>
</dbReference>
<dbReference type="PROSITE" id="PS00617">
    <property type="entry name" value="RECF_1"/>
    <property type="match status" value="1"/>
</dbReference>
<dbReference type="PROSITE" id="PS00618">
    <property type="entry name" value="RECF_2"/>
    <property type="match status" value="1"/>
</dbReference>
<feature type="chain" id="PRO_1000059900" description="DNA replication and repair protein RecF">
    <location>
        <begin position="1"/>
        <end position="370"/>
    </location>
</feature>
<feature type="binding site" evidence="1">
    <location>
        <begin position="30"/>
        <end position="37"/>
    </location>
    <ligand>
        <name>ATP</name>
        <dbReference type="ChEBI" id="CHEBI:30616"/>
    </ligand>
</feature>
<proteinExistence type="inferred from homology"/>
<keyword id="KW-0067">ATP-binding</keyword>
<keyword id="KW-0963">Cytoplasm</keyword>
<keyword id="KW-0227">DNA damage</keyword>
<keyword id="KW-0234">DNA repair</keyword>
<keyword id="KW-0235">DNA replication</keyword>
<keyword id="KW-0238">DNA-binding</keyword>
<keyword id="KW-0547">Nucleotide-binding</keyword>
<keyword id="KW-0742">SOS response</keyword>
<reference key="1">
    <citation type="journal article" date="2007" name="PLoS ONE">
        <title>Paradoxical DNA repair and peroxide resistance gene conservation in Bacillus pumilus SAFR-032.</title>
        <authorList>
            <person name="Gioia J."/>
            <person name="Yerrapragada S."/>
            <person name="Qin X."/>
            <person name="Jiang H."/>
            <person name="Igboeli O.C."/>
            <person name="Muzny D."/>
            <person name="Dugan-Rocha S."/>
            <person name="Ding Y."/>
            <person name="Hawes A."/>
            <person name="Liu W."/>
            <person name="Perez L."/>
            <person name="Kovar C."/>
            <person name="Dinh H."/>
            <person name="Lee S."/>
            <person name="Nazareth L."/>
            <person name="Blyth P."/>
            <person name="Holder M."/>
            <person name="Buhay C."/>
            <person name="Tirumalai M.R."/>
            <person name="Liu Y."/>
            <person name="Dasgupta I."/>
            <person name="Bokhetache L."/>
            <person name="Fujita M."/>
            <person name="Karouia F."/>
            <person name="Eswara Moorthy P."/>
            <person name="Siefert J."/>
            <person name="Uzman A."/>
            <person name="Buzumbo P."/>
            <person name="Verma A."/>
            <person name="Zwiya H."/>
            <person name="McWilliams B.D."/>
            <person name="Olowu A."/>
            <person name="Clinkenbeard K.D."/>
            <person name="Newcombe D."/>
            <person name="Golebiewski L."/>
            <person name="Petrosino J.F."/>
            <person name="Nicholson W.L."/>
            <person name="Fox G.E."/>
            <person name="Venkateswaran K."/>
            <person name="Highlander S.K."/>
            <person name="Weinstock G.M."/>
        </authorList>
    </citation>
    <scope>NUCLEOTIDE SEQUENCE [LARGE SCALE GENOMIC DNA]</scope>
    <source>
        <strain>SAFR-032</strain>
    </source>
</reference>
<name>RECF_BACP2</name>
<protein>
    <recommendedName>
        <fullName evidence="1">DNA replication and repair protein RecF</fullName>
    </recommendedName>
</protein>
<organism>
    <name type="scientific">Bacillus pumilus (strain SAFR-032)</name>
    <dbReference type="NCBI Taxonomy" id="315750"/>
    <lineage>
        <taxon>Bacteria</taxon>
        <taxon>Bacillati</taxon>
        <taxon>Bacillota</taxon>
        <taxon>Bacilli</taxon>
        <taxon>Bacillales</taxon>
        <taxon>Bacillaceae</taxon>
        <taxon>Bacillus</taxon>
    </lineage>
</organism>
<gene>
    <name evidence="1" type="primary">recF</name>
    <name type="ordered locus">BPUM_0004</name>
</gene>
<comment type="function">
    <text evidence="1">The RecF protein is involved in DNA metabolism; it is required for DNA replication and normal SOS inducibility. RecF binds preferentially to single-stranded, linear DNA. It also seems to bind ATP.</text>
</comment>
<comment type="subcellular location">
    <subcellularLocation>
        <location evidence="1">Cytoplasm</location>
    </subcellularLocation>
</comment>
<comment type="similarity">
    <text evidence="1">Belongs to the RecF family.</text>
</comment>
<sequence>MYIQSLALTSYRNYEHTELQFDNKVNVMIGENAQGKTNLMEAIYVLSMAKSHRTSNDKELIRWDQDYAKIEGRVIKKNGPLPMQLVISKKGKKGKVNHIEQQKLSHYVGALNTIMFAPEDLSLVKGSPQIRRRFLDMEIGQVSAVYLHDLSLYQKILSQRNHYLKQLQTRKQTDQAMLEVLTEQLIDAAAKVVKRRLTFTKQLEKWAQPLHFGISRELETLTLQYHTAIEVSEASDLSKIKNSYEESFQKLRDREIDRGVTLWGPHRDDLLFFVNGRDVQTYGSQGQQRTTALSLKLAEIDLIHEEIGEYPILLLDDVLSELDDYRQSHLLHTIQGRVQTFVTTTSVEGIDHATLKEAEIFRVASGKVID</sequence>
<evidence type="ECO:0000255" key="1">
    <source>
        <dbReference type="HAMAP-Rule" id="MF_00365"/>
    </source>
</evidence>